<feature type="chain" id="PRO_0000131658" description="Small ribosomal subunit protein uS5">
    <location>
        <begin position="1"/>
        <end position="236"/>
    </location>
</feature>
<feature type="domain" description="S5 DRBM" evidence="1">
    <location>
        <begin position="61"/>
        <end position="124"/>
    </location>
</feature>
<protein>
    <recommendedName>
        <fullName evidence="1">Small ribosomal subunit protein uS5</fullName>
    </recommendedName>
    <alternativeName>
        <fullName evidence="2">30S ribosomal protein S5</fullName>
    </alternativeName>
</protein>
<keyword id="KW-0687">Ribonucleoprotein</keyword>
<keyword id="KW-0689">Ribosomal protein</keyword>
<keyword id="KW-0694">RNA-binding</keyword>
<keyword id="KW-0699">rRNA-binding</keyword>
<organism>
    <name type="scientific">Pyrococcus horikoshii (strain ATCC 700860 / DSM 12428 / JCM 9974 / NBRC 100139 / OT-3)</name>
    <dbReference type="NCBI Taxonomy" id="70601"/>
    <lineage>
        <taxon>Archaea</taxon>
        <taxon>Methanobacteriati</taxon>
        <taxon>Methanobacteriota</taxon>
        <taxon>Thermococci</taxon>
        <taxon>Thermococcales</taxon>
        <taxon>Thermococcaceae</taxon>
        <taxon>Pyrococcus</taxon>
    </lineage>
</organism>
<comment type="function">
    <text evidence="1">With S4 and S12 plays an important role in translational accuracy.</text>
</comment>
<comment type="subunit">
    <text evidence="1">Part of the 30S ribosomal subunit. Contacts protein S4.</text>
</comment>
<comment type="domain">
    <text>The N-terminal domain interacts with the head of the 30S subunit; the C-terminal domain interacts with the body and contacts protein S4. The interaction surface between S4 and S5 is involved in control of translational fidelity.</text>
</comment>
<comment type="similarity">
    <text evidence="1">Belongs to the universal ribosomal protein uS5 family.</text>
</comment>
<reference key="1">
    <citation type="journal article" date="1998" name="DNA Res.">
        <title>Complete sequence and gene organization of the genome of a hyper-thermophilic archaebacterium, Pyrococcus horikoshii OT3.</title>
        <authorList>
            <person name="Kawarabayasi Y."/>
            <person name="Sawada M."/>
            <person name="Horikawa H."/>
            <person name="Haikawa Y."/>
            <person name="Hino Y."/>
            <person name="Yamamoto S."/>
            <person name="Sekine M."/>
            <person name="Baba S."/>
            <person name="Kosugi H."/>
            <person name="Hosoyama A."/>
            <person name="Nagai Y."/>
            <person name="Sakai M."/>
            <person name="Ogura K."/>
            <person name="Otsuka R."/>
            <person name="Nakazawa H."/>
            <person name="Takamiya M."/>
            <person name="Ohfuku Y."/>
            <person name="Funahashi T."/>
            <person name="Tanaka T."/>
            <person name="Kudoh Y."/>
            <person name="Yamazaki J."/>
            <person name="Kushida N."/>
            <person name="Oguchi A."/>
            <person name="Aoki K."/>
            <person name="Yoshizawa T."/>
            <person name="Nakamura Y."/>
            <person name="Robb F.T."/>
            <person name="Horikoshi K."/>
            <person name="Masuchi Y."/>
            <person name="Shizuya H."/>
            <person name="Kikuchi H."/>
        </authorList>
    </citation>
    <scope>NUCLEOTIDE SEQUENCE [LARGE SCALE GENOMIC DNA]</scope>
    <source>
        <strain>ATCC 700860 / DSM 12428 / JCM 9974 / NBRC 100139 / OT-3</strain>
    </source>
</reference>
<gene>
    <name evidence="1" type="primary">rps5</name>
    <name type="ordered locus">PH1757</name>
</gene>
<proteinExistence type="inferred from homology"/>
<sequence length="236" mass="26616">MSQDWKEYAKRVLDEWQPRTKLGMLVKEGQITDIHEIFRRGYQIKEPEIIDVLLPEVNARENQEIIDIALTVRMTDSGRRVRFRVLAAVGNRDGYVGLGIGHGREVGIAIRKAINYAKLNIIEIKRGCGSWECRCRRPHSVPFAVEGKEGSVRVRLIPGPRGLGLVIGDVGKKILRLAGIQDVWSQTFGETRTTVNFAKAVFNALYNTNRVVVTPEMIERYGIVVGRAMPTSFTLE</sequence>
<dbReference type="EMBL" id="BA000001">
    <property type="protein sequence ID" value="BAA30871.1"/>
    <property type="molecule type" value="Genomic_DNA"/>
</dbReference>
<dbReference type="PIR" id="H71184">
    <property type="entry name" value="H71184"/>
</dbReference>
<dbReference type="RefSeq" id="WP_010885821.1">
    <property type="nucleotide sequence ID" value="NC_000961.1"/>
</dbReference>
<dbReference type="SMR" id="O59439"/>
<dbReference type="STRING" id="70601.gene:9378754"/>
<dbReference type="EnsemblBacteria" id="BAA30871">
    <property type="protein sequence ID" value="BAA30871"/>
    <property type="gene ID" value="BAA30871"/>
</dbReference>
<dbReference type="GeneID" id="1442602"/>
<dbReference type="KEGG" id="pho:PH1757"/>
<dbReference type="eggNOG" id="arCOG04087">
    <property type="taxonomic scope" value="Archaea"/>
</dbReference>
<dbReference type="OrthoDB" id="38155at2157"/>
<dbReference type="Proteomes" id="UP000000752">
    <property type="component" value="Chromosome"/>
</dbReference>
<dbReference type="GO" id="GO:0022627">
    <property type="term" value="C:cytosolic small ribosomal subunit"/>
    <property type="evidence" value="ECO:0007669"/>
    <property type="project" value="TreeGrafter"/>
</dbReference>
<dbReference type="GO" id="GO:0019843">
    <property type="term" value="F:rRNA binding"/>
    <property type="evidence" value="ECO:0007669"/>
    <property type="project" value="UniProtKB-UniRule"/>
</dbReference>
<dbReference type="GO" id="GO:0003735">
    <property type="term" value="F:structural constituent of ribosome"/>
    <property type="evidence" value="ECO:0007669"/>
    <property type="project" value="InterPro"/>
</dbReference>
<dbReference type="GO" id="GO:0006412">
    <property type="term" value="P:translation"/>
    <property type="evidence" value="ECO:0007669"/>
    <property type="project" value="UniProtKB-UniRule"/>
</dbReference>
<dbReference type="FunFam" id="3.30.160.20:FF:000002">
    <property type="entry name" value="40S ribosomal protein S2"/>
    <property type="match status" value="1"/>
</dbReference>
<dbReference type="FunFam" id="3.30.230.10:FF:000004">
    <property type="entry name" value="40S ribosomal protein S2"/>
    <property type="match status" value="1"/>
</dbReference>
<dbReference type="Gene3D" id="3.30.160.20">
    <property type="match status" value="1"/>
</dbReference>
<dbReference type="Gene3D" id="3.30.230.10">
    <property type="match status" value="1"/>
</dbReference>
<dbReference type="HAMAP" id="MF_01307_A">
    <property type="entry name" value="Ribosomal_uS5_A"/>
    <property type="match status" value="1"/>
</dbReference>
<dbReference type="InterPro" id="IPR020568">
    <property type="entry name" value="Ribosomal_Su5_D2-typ_SF"/>
</dbReference>
<dbReference type="InterPro" id="IPR000851">
    <property type="entry name" value="Ribosomal_uS5"/>
</dbReference>
<dbReference type="InterPro" id="IPR047866">
    <property type="entry name" value="Ribosomal_uS5_arc"/>
</dbReference>
<dbReference type="InterPro" id="IPR005324">
    <property type="entry name" value="Ribosomal_uS5_C"/>
</dbReference>
<dbReference type="InterPro" id="IPR005711">
    <property type="entry name" value="Ribosomal_uS5_euk/arc"/>
</dbReference>
<dbReference type="InterPro" id="IPR013810">
    <property type="entry name" value="Ribosomal_uS5_N"/>
</dbReference>
<dbReference type="InterPro" id="IPR018192">
    <property type="entry name" value="Ribosomal_uS5_N_CS"/>
</dbReference>
<dbReference type="InterPro" id="IPR014721">
    <property type="entry name" value="Ribsml_uS5_D2-typ_fold_subgr"/>
</dbReference>
<dbReference type="NCBIfam" id="NF003125">
    <property type="entry name" value="PRK04044.1"/>
    <property type="match status" value="1"/>
</dbReference>
<dbReference type="NCBIfam" id="TIGR01020">
    <property type="entry name" value="uS5_euk_arch"/>
    <property type="match status" value="1"/>
</dbReference>
<dbReference type="PANTHER" id="PTHR13718:SF4">
    <property type="entry name" value="40S RIBOSOMAL PROTEIN S2"/>
    <property type="match status" value="1"/>
</dbReference>
<dbReference type="PANTHER" id="PTHR13718">
    <property type="entry name" value="RIBOSOMAL S SUBUNIT"/>
    <property type="match status" value="1"/>
</dbReference>
<dbReference type="Pfam" id="PF00333">
    <property type="entry name" value="Ribosomal_S5"/>
    <property type="match status" value="1"/>
</dbReference>
<dbReference type="Pfam" id="PF03719">
    <property type="entry name" value="Ribosomal_S5_C"/>
    <property type="match status" value="1"/>
</dbReference>
<dbReference type="SUPFAM" id="SSF54768">
    <property type="entry name" value="dsRNA-binding domain-like"/>
    <property type="match status" value="1"/>
</dbReference>
<dbReference type="SUPFAM" id="SSF54211">
    <property type="entry name" value="Ribosomal protein S5 domain 2-like"/>
    <property type="match status" value="1"/>
</dbReference>
<dbReference type="PROSITE" id="PS00585">
    <property type="entry name" value="RIBOSOMAL_S5"/>
    <property type="match status" value="1"/>
</dbReference>
<dbReference type="PROSITE" id="PS50881">
    <property type="entry name" value="S5_DSRBD"/>
    <property type="match status" value="1"/>
</dbReference>
<accession>O59439</accession>
<name>RS5_PYRHO</name>
<evidence type="ECO:0000255" key="1">
    <source>
        <dbReference type="HAMAP-Rule" id="MF_01307"/>
    </source>
</evidence>
<evidence type="ECO:0000305" key="2"/>